<keyword id="KW-0963">Cytoplasm</keyword>
<keyword id="KW-0227">DNA damage</keyword>
<keyword id="KW-0233">DNA recombination</keyword>
<keyword id="KW-0234">DNA repair</keyword>
<keyword id="KW-0238">DNA-binding</keyword>
<accession>A4VYN2</accession>
<reference key="1">
    <citation type="journal article" date="2007" name="PLoS ONE">
        <title>A glimpse of streptococcal toxic shock syndrome from comparative genomics of S. suis 2 Chinese isolates.</title>
        <authorList>
            <person name="Chen C."/>
            <person name="Tang J."/>
            <person name="Dong W."/>
            <person name="Wang C."/>
            <person name="Feng Y."/>
            <person name="Wang J."/>
            <person name="Zheng F."/>
            <person name="Pan X."/>
            <person name="Liu D."/>
            <person name="Li M."/>
            <person name="Song Y."/>
            <person name="Zhu X."/>
            <person name="Sun H."/>
            <person name="Feng T."/>
            <person name="Guo Z."/>
            <person name="Ju A."/>
            <person name="Ge J."/>
            <person name="Dong Y."/>
            <person name="Sun W."/>
            <person name="Jiang Y."/>
            <person name="Wang J."/>
            <person name="Yan J."/>
            <person name="Yang H."/>
            <person name="Wang X."/>
            <person name="Gao G.F."/>
            <person name="Yang R."/>
            <person name="Wang J."/>
            <person name="Yu J."/>
        </authorList>
    </citation>
    <scope>NUCLEOTIDE SEQUENCE [LARGE SCALE GENOMIC DNA]</scope>
    <source>
        <strain>98HAH33</strain>
    </source>
</reference>
<protein>
    <recommendedName>
        <fullName evidence="1">Holliday junction branch migration complex subunit RuvA</fullName>
    </recommendedName>
</protein>
<name>RUVA_STRS2</name>
<feature type="chain" id="PRO_1000002572" description="Holliday junction branch migration complex subunit RuvA">
    <location>
        <begin position="1"/>
        <end position="196"/>
    </location>
</feature>
<feature type="region of interest" description="Domain I" evidence="1">
    <location>
        <begin position="1"/>
        <end position="63"/>
    </location>
</feature>
<feature type="region of interest" description="Domain II" evidence="1">
    <location>
        <begin position="64"/>
        <end position="142"/>
    </location>
</feature>
<feature type="region of interest" description="Flexible linker" evidence="1">
    <location>
        <begin position="142"/>
        <end position="146"/>
    </location>
</feature>
<feature type="region of interest" description="Domain III" evidence="1">
    <location>
        <begin position="147"/>
        <end position="196"/>
    </location>
</feature>
<dbReference type="EMBL" id="CP000408">
    <property type="protein sequence ID" value="ABP91221.1"/>
    <property type="molecule type" value="Genomic_DNA"/>
</dbReference>
<dbReference type="SMR" id="A4VYN2"/>
<dbReference type="KEGG" id="ssv:SSU98_0061"/>
<dbReference type="HOGENOM" id="CLU_087936_1_0_9"/>
<dbReference type="GO" id="GO:0005737">
    <property type="term" value="C:cytoplasm"/>
    <property type="evidence" value="ECO:0007669"/>
    <property type="project" value="UniProtKB-SubCell"/>
</dbReference>
<dbReference type="GO" id="GO:0009379">
    <property type="term" value="C:Holliday junction helicase complex"/>
    <property type="evidence" value="ECO:0007669"/>
    <property type="project" value="InterPro"/>
</dbReference>
<dbReference type="GO" id="GO:0048476">
    <property type="term" value="C:Holliday junction resolvase complex"/>
    <property type="evidence" value="ECO:0007669"/>
    <property type="project" value="UniProtKB-UniRule"/>
</dbReference>
<dbReference type="GO" id="GO:0005524">
    <property type="term" value="F:ATP binding"/>
    <property type="evidence" value="ECO:0007669"/>
    <property type="project" value="InterPro"/>
</dbReference>
<dbReference type="GO" id="GO:0000400">
    <property type="term" value="F:four-way junction DNA binding"/>
    <property type="evidence" value="ECO:0007669"/>
    <property type="project" value="UniProtKB-UniRule"/>
</dbReference>
<dbReference type="GO" id="GO:0009378">
    <property type="term" value="F:four-way junction helicase activity"/>
    <property type="evidence" value="ECO:0007669"/>
    <property type="project" value="InterPro"/>
</dbReference>
<dbReference type="GO" id="GO:0006310">
    <property type="term" value="P:DNA recombination"/>
    <property type="evidence" value="ECO:0007669"/>
    <property type="project" value="UniProtKB-UniRule"/>
</dbReference>
<dbReference type="GO" id="GO:0006281">
    <property type="term" value="P:DNA repair"/>
    <property type="evidence" value="ECO:0007669"/>
    <property type="project" value="UniProtKB-UniRule"/>
</dbReference>
<dbReference type="CDD" id="cd14332">
    <property type="entry name" value="UBA_RuvA_C"/>
    <property type="match status" value="1"/>
</dbReference>
<dbReference type="Gene3D" id="1.10.150.20">
    <property type="entry name" value="5' to 3' exonuclease, C-terminal subdomain"/>
    <property type="match status" value="1"/>
</dbReference>
<dbReference type="Gene3D" id="1.10.8.10">
    <property type="entry name" value="DNA helicase RuvA subunit, C-terminal domain"/>
    <property type="match status" value="1"/>
</dbReference>
<dbReference type="Gene3D" id="2.40.50.140">
    <property type="entry name" value="Nucleic acid-binding proteins"/>
    <property type="match status" value="1"/>
</dbReference>
<dbReference type="HAMAP" id="MF_00031">
    <property type="entry name" value="DNA_HJ_migration_RuvA"/>
    <property type="match status" value="1"/>
</dbReference>
<dbReference type="InterPro" id="IPR013849">
    <property type="entry name" value="DNA_helicase_Holl-junc_RuvA_I"/>
</dbReference>
<dbReference type="InterPro" id="IPR003583">
    <property type="entry name" value="Hlx-hairpin-Hlx_DNA-bd_motif"/>
</dbReference>
<dbReference type="InterPro" id="IPR012340">
    <property type="entry name" value="NA-bd_OB-fold"/>
</dbReference>
<dbReference type="InterPro" id="IPR000085">
    <property type="entry name" value="RuvA"/>
</dbReference>
<dbReference type="InterPro" id="IPR010994">
    <property type="entry name" value="RuvA_2-like"/>
</dbReference>
<dbReference type="InterPro" id="IPR011114">
    <property type="entry name" value="RuvA_C"/>
</dbReference>
<dbReference type="InterPro" id="IPR036267">
    <property type="entry name" value="RuvA_C_sf"/>
</dbReference>
<dbReference type="NCBIfam" id="TIGR00084">
    <property type="entry name" value="ruvA"/>
    <property type="match status" value="1"/>
</dbReference>
<dbReference type="Pfam" id="PF14520">
    <property type="entry name" value="HHH_5"/>
    <property type="match status" value="1"/>
</dbReference>
<dbReference type="Pfam" id="PF07499">
    <property type="entry name" value="RuvA_C"/>
    <property type="match status" value="1"/>
</dbReference>
<dbReference type="Pfam" id="PF01330">
    <property type="entry name" value="RuvA_N"/>
    <property type="match status" value="1"/>
</dbReference>
<dbReference type="SMART" id="SM00278">
    <property type="entry name" value="HhH1"/>
    <property type="match status" value="2"/>
</dbReference>
<dbReference type="SUPFAM" id="SSF46929">
    <property type="entry name" value="DNA helicase RuvA subunit, C-terminal domain"/>
    <property type="match status" value="1"/>
</dbReference>
<dbReference type="SUPFAM" id="SSF50249">
    <property type="entry name" value="Nucleic acid-binding proteins"/>
    <property type="match status" value="1"/>
</dbReference>
<dbReference type="SUPFAM" id="SSF47781">
    <property type="entry name" value="RuvA domain 2-like"/>
    <property type="match status" value="1"/>
</dbReference>
<sequence>MYDYIKGILTKITAKYIVVETQGVGYILQVANPYAYSGQVQQEVTVYTHQVIREDAHLLYGFATENEKSVFLSLISVSGIGPTTALAIIAVDDNDGLVRAIEQKNITYLTKFPKIGKKTAQQMILDLEGKFVMSEEAGPVQQVAPSSENIALEEAMEAMEALGYRPAELKKIKKFFEGTNDTAENYIKSALKMLMK</sequence>
<gene>
    <name evidence="1" type="primary">ruvA</name>
    <name type="ordered locus">SSU98_0061</name>
</gene>
<organism>
    <name type="scientific">Streptococcus suis (strain 98HAH33)</name>
    <dbReference type="NCBI Taxonomy" id="391296"/>
    <lineage>
        <taxon>Bacteria</taxon>
        <taxon>Bacillati</taxon>
        <taxon>Bacillota</taxon>
        <taxon>Bacilli</taxon>
        <taxon>Lactobacillales</taxon>
        <taxon>Streptococcaceae</taxon>
        <taxon>Streptococcus</taxon>
    </lineage>
</organism>
<comment type="function">
    <text evidence="1">The RuvA-RuvB-RuvC complex processes Holliday junction (HJ) DNA during genetic recombination and DNA repair, while the RuvA-RuvB complex plays an important role in the rescue of blocked DNA replication forks via replication fork reversal (RFR). RuvA specifically binds to HJ cruciform DNA, conferring on it an open structure. The RuvB hexamer acts as an ATP-dependent pump, pulling dsDNA into and through the RuvAB complex. HJ branch migration allows RuvC to scan DNA until it finds its consensus sequence, where it cleaves and resolves the cruciform DNA.</text>
</comment>
<comment type="subunit">
    <text evidence="1">Homotetramer. Forms an RuvA(8)-RuvB(12)-Holliday junction (HJ) complex. HJ DNA is sandwiched between 2 RuvA tetramers; dsDNA enters through RuvA and exits via RuvB. An RuvB hexamer assembles on each DNA strand where it exits the tetramer. Each RuvB hexamer is contacted by two RuvA subunits (via domain III) on 2 adjacent RuvB subunits; this complex drives branch migration. In the full resolvosome a probable DNA-RuvA(4)-RuvB(12)-RuvC(2) complex forms which resolves the HJ.</text>
</comment>
<comment type="subcellular location">
    <subcellularLocation>
        <location evidence="1">Cytoplasm</location>
    </subcellularLocation>
</comment>
<comment type="domain">
    <text evidence="1">Has three domains with a flexible linker between the domains II and III and assumes an 'L' shape. Domain III is highly mobile and contacts RuvB.</text>
</comment>
<comment type="similarity">
    <text evidence="1">Belongs to the RuvA family.</text>
</comment>
<proteinExistence type="inferred from homology"/>
<evidence type="ECO:0000255" key="1">
    <source>
        <dbReference type="HAMAP-Rule" id="MF_00031"/>
    </source>
</evidence>